<keyword id="KW-0002">3D-structure</keyword>
<keyword id="KW-0067">ATP-binding</keyword>
<keyword id="KW-0436">Ligase</keyword>
<keyword id="KW-0460">Magnesium</keyword>
<keyword id="KW-0464">Manganese</keyword>
<keyword id="KW-0479">Metal-binding</keyword>
<keyword id="KW-0547">Nucleotide-binding</keyword>
<keyword id="KW-0648">Protein biosynthesis</keyword>
<keyword id="KW-1185">Reference proteome</keyword>
<accession>Q9HTZ2</accession>
<gene>
    <name evidence="1" type="primary">rimK</name>
    <name type="ordered locus">PA5197</name>
</gene>
<organism>
    <name type="scientific">Pseudomonas aeruginosa (strain ATCC 15692 / DSM 22644 / CIP 104116 / JCM 14847 / LMG 12228 / 1C / PRS 101 / PAO1)</name>
    <dbReference type="NCBI Taxonomy" id="208964"/>
    <lineage>
        <taxon>Bacteria</taxon>
        <taxon>Pseudomonadati</taxon>
        <taxon>Pseudomonadota</taxon>
        <taxon>Gammaproteobacteria</taxon>
        <taxon>Pseudomonadales</taxon>
        <taxon>Pseudomonadaceae</taxon>
        <taxon>Pseudomonas</taxon>
    </lineage>
</organism>
<protein>
    <recommendedName>
        <fullName evidence="1">Probable alpha-L-glutamate ligase</fullName>
        <ecNumber evidence="1">6.3.2.-</ecNumber>
    </recommendedName>
</protein>
<name>RIMK_PSEAE</name>
<evidence type="ECO:0000255" key="1">
    <source>
        <dbReference type="HAMAP-Rule" id="MF_01552"/>
    </source>
</evidence>
<evidence type="ECO:0007829" key="2">
    <source>
        <dbReference type="PDB" id="7QYR"/>
    </source>
</evidence>
<sequence length="301" mass="32604">MKIAVLSRNPRLYSTRRLVEAGRERGHEMVVIDTLRAYMNIASHKPQIHYRGQPLEGFDAVIPRIGASVTFYGCAVLRQFEMMGVFPLNESVAIARSRDKLRSLQLLSRKGIGLPVTGFAHSPDDVPDLIEMVGGAPLVIKLLEGTQGIGVVLCETEKAAESVLEAFMGLKHNIMVQEYIKEAGGADIRCFVVGDKVIASMKRQAAPGEFRSNLHRGGSASLIKITPEERMTAIRAARVMGLNVAGVDILRSNHGPLVMEVNSSPGLEGIESTTGKDIAGIIIQYLEKNGGPHLARTKGKG</sequence>
<comment type="cofactor">
    <cofactor evidence="1">
        <name>Mg(2+)</name>
        <dbReference type="ChEBI" id="CHEBI:18420"/>
    </cofactor>
    <cofactor evidence="1">
        <name>Mn(2+)</name>
        <dbReference type="ChEBI" id="CHEBI:29035"/>
    </cofactor>
    <text evidence="1">Binds 2 magnesium or manganese ions per subunit.</text>
</comment>
<comment type="similarity">
    <text evidence="1">Belongs to the RimK family.</text>
</comment>
<reference key="1">
    <citation type="journal article" date="2000" name="Nature">
        <title>Complete genome sequence of Pseudomonas aeruginosa PAO1, an opportunistic pathogen.</title>
        <authorList>
            <person name="Stover C.K."/>
            <person name="Pham X.-Q.T."/>
            <person name="Erwin A.L."/>
            <person name="Mizoguchi S.D."/>
            <person name="Warrener P."/>
            <person name="Hickey M.J."/>
            <person name="Brinkman F.S.L."/>
            <person name="Hufnagle W.O."/>
            <person name="Kowalik D.J."/>
            <person name="Lagrou M."/>
            <person name="Garber R.L."/>
            <person name="Goltry L."/>
            <person name="Tolentino E."/>
            <person name="Westbrock-Wadman S."/>
            <person name="Yuan Y."/>
            <person name="Brody L.L."/>
            <person name="Coulter S.N."/>
            <person name="Folger K.R."/>
            <person name="Kas A."/>
            <person name="Larbig K."/>
            <person name="Lim R.M."/>
            <person name="Smith K.A."/>
            <person name="Spencer D.H."/>
            <person name="Wong G.K.-S."/>
            <person name="Wu Z."/>
            <person name="Paulsen I.T."/>
            <person name="Reizer J."/>
            <person name="Saier M.H. Jr."/>
            <person name="Hancock R.E.W."/>
            <person name="Lory S."/>
            <person name="Olson M.V."/>
        </authorList>
    </citation>
    <scope>NUCLEOTIDE SEQUENCE [LARGE SCALE GENOMIC DNA]</scope>
    <source>
        <strain>ATCC 15692 / DSM 22644 / CIP 104116 / JCM 14847 / LMG 12228 / 1C / PRS 101 / PAO1</strain>
    </source>
</reference>
<proteinExistence type="evidence at protein level"/>
<feature type="chain" id="PRO_0000205471" description="Probable alpha-L-glutamate ligase">
    <location>
        <begin position="1"/>
        <end position="301"/>
    </location>
</feature>
<feature type="domain" description="ATP-grasp" evidence="1">
    <location>
        <begin position="104"/>
        <end position="287"/>
    </location>
</feature>
<feature type="binding site" evidence="1">
    <location>
        <position position="141"/>
    </location>
    <ligand>
        <name>ATP</name>
        <dbReference type="ChEBI" id="CHEBI:30616"/>
    </ligand>
</feature>
<feature type="binding site" evidence="1">
    <location>
        <begin position="178"/>
        <end position="179"/>
    </location>
    <ligand>
        <name>ATP</name>
        <dbReference type="ChEBI" id="CHEBI:30616"/>
    </ligand>
</feature>
<feature type="binding site" evidence="1">
    <location>
        <position position="187"/>
    </location>
    <ligand>
        <name>ATP</name>
        <dbReference type="ChEBI" id="CHEBI:30616"/>
    </ligand>
</feature>
<feature type="binding site" evidence="1">
    <location>
        <begin position="211"/>
        <end position="213"/>
    </location>
    <ligand>
        <name>ATP</name>
        <dbReference type="ChEBI" id="CHEBI:30616"/>
    </ligand>
</feature>
<feature type="binding site" evidence="1">
    <location>
        <position position="248"/>
    </location>
    <ligand>
        <name>Mg(2+)</name>
        <dbReference type="ChEBI" id="CHEBI:18420"/>
        <label>1</label>
    </ligand>
</feature>
<feature type="binding site" evidence="1">
    <location>
        <position position="248"/>
    </location>
    <ligand>
        <name>Mn(2+)</name>
        <dbReference type="ChEBI" id="CHEBI:29035"/>
        <label>1</label>
    </ligand>
</feature>
<feature type="binding site" evidence="1">
    <location>
        <position position="260"/>
    </location>
    <ligand>
        <name>Mg(2+)</name>
        <dbReference type="ChEBI" id="CHEBI:18420"/>
        <label>1</label>
    </ligand>
</feature>
<feature type="binding site" evidence="1">
    <location>
        <position position="260"/>
    </location>
    <ligand>
        <name>Mg(2+)</name>
        <dbReference type="ChEBI" id="CHEBI:18420"/>
        <label>2</label>
    </ligand>
</feature>
<feature type="binding site" evidence="1">
    <location>
        <position position="260"/>
    </location>
    <ligand>
        <name>Mn(2+)</name>
        <dbReference type="ChEBI" id="CHEBI:29035"/>
        <label>1</label>
    </ligand>
</feature>
<feature type="binding site" evidence="1">
    <location>
        <position position="260"/>
    </location>
    <ligand>
        <name>Mn(2+)</name>
        <dbReference type="ChEBI" id="CHEBI:29035"/>
        <label>2</label>
    </ligand>
</feature>
<feature type="binding site" evidence="1">
    <location>
        <position position="262"/>
    </location>
    <ligand>
        <name>Mg(2+)</name>
        <dbReference type="ChEBI" id="CHEBI:18420"/>
        <label>2</label>
    </ligand>
</feature>
<feature type="binding site" evidence="1">
    <location>
        <position position="262"/>
    </location>
    <ligand>
        <name>Mn(2+)</name>
        <dbReference type="ChEBI" id="CHEBI:29035"/>
        <label>2</label>
    </ligand>
</feature>
<feature type="strand" evidence="2">
    <location>
        <begin position="2"/>
        <end position="6"/>
    </location>
</feature>
<feature type="helix" evidence="2">
    <location>
        <begin position="13"/>
        <end position="24"/>
    </location>
</feature>
<feature type="strand" evidence="2">
    <location>
        <begin position="28"/>
        <end position="32"/>
    </location>
</feature>
<feature type="helix" evidence="2">
    <location>
        <begin position="34"/>
        <end position="36"/>
    </location>
</feature>
<feature type="strand" evidence="2">
    <location>
        <begin position="37"/>
        <end position="40"/>
    </location>
</feature>
<feature type="strand" evidence="2">
    <location>
        <begin position="47"/>
        <end position="50"/>
    </location>
</feature>
<feature type="strand" evidence="2">
    <location>
        <begin position="60"/>
        <end position="63"/>
    </location>
</feature>
<feature type="helix" evidence="2">
    <location>
        <begin position="67"/>
        <end position="69"/>
    </location>
</feature>
<feature type="helix" evidence="2">
    <location>
        <begin position="70"/>
        <end position="82"/>
    </location>
</feature>
<feature type="strand" evidence="2">
    <location>
        <begin position="86"/>
        <end position="89"/>
    </location>
</feature>
<feature type="helix" evidence="2">
    <location>
        <begin position="91"/>
        <end position="98"/>
    </location>
</feature>
<feature type="helix" evidence="2">
    <location>
        <begin position="100"/>
        <end position="109"/>
    </location>
</feature>
<feature type="strand" evidence="2">
    <location>
        <begin position="117"/>
        <end position="122"/>
    </location>
</feature>
<feature type="helix" evidence="2">
    <location>
        <begin position="126"/>
        <end position="132"/>
    </location>
</feature>
<feature type="strand" evidence="2">
    <location>
        <begin position="136"/>
        <end position="144"/>
    </location>
</feature>
<feature type="strand" evidence="2">
    <location>
        <begin position="147"/>
        <end position="154"/>
    </location>
</feature>
<feature type="helix" evidence="2">
    <location>
        <begin position="157"/>
        <end position="167"/>
    </location>
</feature>
<feature type="turn" evidence="2">
    <location>
        <begin position="168"/>
        <end position="171"/>
    </location>
</feature>
<feature type="strand" evidence="2">
    <location>
        <begin position="173"/>
        <end position="178"/>
    </location>
</feature>
<feature type="helix" evidence="2">
    <location>
        <begin position="181"/>
        <end position="183"/>
    </location>
</feature>
<feature type="strand" evidence="2">
    <location>
        <begin position="186"/>
        <end position="193"/>
    </location>
</feature>
<feature type="strand" evidence="2">
    <location>
        <begin position="196"/>
        <end position="204"/>
    </location>
</feature>
<feature type="turn" evidence="2">
    <location>
        <begin position="214"/>
        <end position="217"/>
    </location>
</feature>
<feature type="strand" evidence="2">
    <location>
        <begin position="219"/>
        <end position="221"/>
    </location>
</feature>
<feature type="helix" evidence="2">
    <location>
        <begin position="227"/>
        <end position="240"/>
    </location>
</feature>
<feature type="strand" evidence="2">
    <location>
        <begin position="243"/>
        <end position="252"/>
    </location>
</feature>
<feature type="strand" evidence="2">
    <location>
        <begin position="255"/>
        <end position="265"/>
    </location>
</feature>
<feature type="helix" evidence="2">
    <location>
        <begin position="268"/>
        <end position="274"/>
    </location>
</feature>
<feature type="helix" evidence="2">
    <location>
        <begin position="278"/>
        <end position="290"/>
    </location>
</feature>
<dbReference type="EC" id="6.3.2.-" evidence="1"/>
<dbReference type="EMBL" id="AE004091">
    <property type="protein sequence ID" value="AAG08582.1"/>
    <property type="molecule type" value="Genomic_DNA"/>
</dbReference>
<dbReference type="PIR" id="D82997">
    <property type="entry name" value="D82997"/>
</dbReference>
<dbReference type="RefSeq" id="NP_253884.1">
    <property type="nucleotide sequence ID" value="NC_002516.2"/>
</dbReference>
<dbReference type="RefSeq" id="WP_003096254.1">
    <property type="nucleotide sequence ID" value="NZ_QZGE01000002.1"/>
</dbReference>
<dbReference type="PDB" id="7QYR">
    <property type="method" value="X-ray"/>
    <property type="resolution" value="2.40 A"/>
    <property type="chains" value="A/B/C/D/E/F/G/H=1-301"/>
</dbReference>
<dbReference type="PDBsum" id="7QYR"/>
<dbReference type="SMR" id="Q9HTZ2"/>
<dbReference type="FunCoup" id="Q9HTZ2">
    <property type="interactions" value="263"/>
</dbReference>
<dbReference type="STRING" id="208964.PA5197"/>
<dbReference type="PaxDb" id="208964-PA5197"/>
<dbReference type="GeneID" id="77223730"/>
<dbReference type="GeneID" id="880288"/>
<dbReference type="KEGG" id="pae:PA5197"/>
<dbReference type="PATRIC" id="fig|208964.12.peg.5447"/>
<dbReference type="PseudoCAP" id="PA5197"/>
<dbReference type="HOGENOM" id="CLU_054353_0_1_6"/>
<dbReference type="InParanoid" id="Q9HTZ2"/>
<dbReference type="OrthoDB" id="3865600at2"/>
<dbReference type="PhylomeDB" id="Q9HTZ2"/>
<dbReference type="BioCyc" id="PAER208964:G1FZ6-5316-MONOMER"/>
<dbReference type="Proteomes" id="UP000002438">
    <property type="component" value="Chromosome"/>
</dbReference>
<dbReference type="GO" id="GO:0005737">
    <property type="term" value="C:cytoplasm"/>
    <property type="evidence" value="ECO:0000318"/>
    <property type="project" value="GO_Central"/>
</dbReference>
<dbReference type="GO" id="GO:0005524">
    <property type="term" value="F:ATP binding"/>
    <property type="evidence" value="ECO:0007669"/>
    <property type="project" value="UniProtKB-UniRule"/>
</dbReference>
<dbReference type="GO" id="GO:0046872">
    <property type="term" value="F:metal ion binding"/>
    <property type="evidence" value="ECO:0007669"/>
    <property type="project" value="UniProtKB-KW"/>
</dbReference>
<dbReference type="GO" id="GO:0018169">
    <property type="term" value="F:ribosomal S6-glutamic acid ligase activity"/>
    <property type="evidence" value="ECO:0000318"/>
    <property type="project" value="GO_Central"/>
</dbReference>
<dbReference type="GO" id="GO:0036211">
    <property type="term" value="P:protein modification process"/>
    <property type="evidence" value="ECO:0007669"/>
    <property type="project" value="InterPro"/>
</dbReference>
<dbReference type="GO" id="GO:0009432">
    <property type="term" value="P:SOS response"/>
    <property type="evidence" value="ECO:0000318"/>
    <property type="project" value="GO_Central"/>
</dbReference>
<dbReference type="GO" id="GO:0006412">
    <property type="term" value="P:translation"/>
    <property type="evidence" value="ECO:0007669"/>
    <property type="project" value="UniProtKB-KW"/>
</dbReference>
<dbReference type="FunFam" id="3.40.50.20:FF:000004">
    <property type="entry name" value="Probable alpha-L-glutamate ligase"/>
    <property type="match status" value="1"/>
</dbReference>
<dbReference type="FunFam" id="3.30.1490.20:FF:000005">
    <property type="entry name" value="Probable alpha-L-glutamate ligase 1"/>
    <property type="match status" value="1"/>
</dbReference>
<dbReference type="FunFam" id="3.30.470.20:FF:000016">
    <property type="entry name" value="Ribosomal protein S6--L-glutamate ligase"/>
    <property type="match status" value="1"/>
</dbReference>
<dbReference type="Gene3D" id="3.40.50.20">
    <property type="match status" value="1"/>
</dbReference>
<dbReference type="Gene3D" id="3.30.1490.20">
    <property type="entry name" value="ATP-grasp fold, A domain"/>
    <property type="match status" value="1"/>
</dbReference>
<dbReference type="Gene3D" id="3.30.470.20">
    <property type="entry name" value="ATP-grasp fold, B domain"/>
    <property type="match status" value="1"/>
</dbReference>
<dbReference type="HAMAP" id="MF_01552">
    <property type="entry name" value="RimK"/>
    <property type="match status" value="1"/>
</dbReference>
<dbReference type="InterPro" id="IPR011761">
    <property type="entry name" value="ATP-grasp"/>
</dbReference>
<dbReference type="InterPro" id="IPR013651">
    <property type="entry name" value="ATP-grasp_RimK-type"/>
</dbReference>
<dbReference type="InterPro" id="IPR013815">
    <property type="entry name" value="ATP_grasp_subdomain_1"/>
</dbReference>
<dbReference type="InterPro" id="IPR023533">
    <property type="entry name" value="RimK"/>
</dbReference>
<dbReference type="InterPro" id="IPR041107">
    <property type="entry name" value="Rimk_N"/>
</dbReference>
<dbReference type="InterPro" id="IPR004666">
    <property type="entry name" value="Rp_bS6_RimK/Lys_biosynth_LsyX"/>
</dbReference>
<dbReference type="NCBIfam" id="NF007764">
    <property type="entry name" value="PRK10446.1"/>
    <property type="match status" value="1"/>
</dbReference>
<dbReference type="NCBIfam" id="TIGR00768">
    <property type="entry name" value="rimK_fam"/>
    <property type="match status" value="1"/>
</dbReference>
<dbReference type="PANTHER" id="PTHR21621:SF7">
    <property type="entry name" value="RIBOSOMAL PROTEIN BS6--L-GLUTAMATE LIGASE"/>
    <property type="match status" value="1"/>
</dbReference>
<dbReference type="PANTHER" id="PTHR21621">
    <property type="entry name" value="RIBOSOMAL PROTEIN S6 MODIFICATION PROTEIN"/>
    <property type="match status" value="1"/>
</dbReference>
<dbReference type="Pfam" id="PF08443">
    <property type="entry name" value="RimK"/>
    <property type="match status" value="1"/>
</dbReference>
<dbReference type="Pfam" id="PF18030">
    <property type="entry name" value="Rimk_N"/>
    <property type="match status" value="1"/>
</dbReference>
<dbReference type="SUPFAM" id="SSF56059">
    <property type="entry name" value="Glutathione synthetase ATP-binding domain-like"/>
    <property type="match status" value="1"/>
</dbReference>
<dbReference type="PROSITE" id="PS50975">
    <property type="entry name" value="ATP_GRASP"/>
    <property type="match status" value="1"/>
</dbReference>